<protein>
    <recommendedName>
        <fullName evidence="1">Nucleotide-binding protein STH186</fullName>
    </recommendedName>
</protein>
<reference key="1">
    <citation type="journal article" date="2004" name="Nucleic Acids Res.">
        <title>Genome sequence of Symbiobacterium thermophilum, an uncultivable bacterium that depends on microbial commensalism.</title>
        <authorList>
            <person name="Ueda K."/>
            <person name="Yamashita A."/>
            <person name="Ishikawa J."/>
            <person name="Shimada M."/>
            <person name="Watsuji T."/>
            <person name="Morimura K."/>
            <person name="Ikeda H."/>
            <person name="Hattori M."/>
            <person name="Beppu T."/>
        </authorList>
    </citation>
    <scope>NUCLEOTIDE SEQUENCE [LARGE SCALE GENOMIC DNA]</scope>
    <source>
        <strain>DSM 24528 / JCM 14929 / IAM 14863 / T</strain>
    </source>
</reference>
<feature type="chain" id="PRO_0000107778" description="Nucleotide-binding protein STH186">
    <location>
        <begin position="1"/>
        <end position="302"/>
    </location>
</feature>
<feature type="binding site" evidence="1">
    <location>
        <begin position="15"/>
        <end position="22"/>
    </location>
    <ligand>
        <name>ATP</name>
        <dbReference type="ChEBI" id="CHEBI:30616"/>
    </ligand>
</feature>
<feature type="binding site" evidence="1">
    <location>
        <begin position="66"/>
        <end position="69"/>
    </location>
    <ligand>
        <name>GTP</name>
        <dbReference type="ChEBI" id="CHEBI:37565"/>
    </ligand>
</feature>
<accession>Q67T22</accession>
<dbReference type="EMBL" id="AP006840">
    <property type="protein sequence ID" value="BAD39171.1"/>
    <property type="molecule type" value="Genomic_DNA"/>
</dbReference>
<dbReference type="RefSeq" id="WP_011194321.1">
    <property type="nucleotide sequence ID" value="NC_006177.1"/>
</dbReference>
<dbReference type="SMR" id="Q67T22"/>
<dbReference type="STRING" id="292459.STH186"/>
<dbReference type="KEGG" id="sth:STH186"/>
<dbReference type="eggNOG" id="COG1660">
    <property type="taxonomic scope" value="Bacteria"/>
</dbReference>
<dbReference type="HOGENOM" id="CLU_059558_0_0_9"/>
<dbReference type="OrthoDB" id="9784461at2"/>
<dbReference type="Proteomes" id="UP000000417">
    <property type="component" value="Chromosome"/>
</dbReference>
<dbReference type="GO" id="GO:0005524">
    <property type="term" value="F:ATP binding"/>
    <property type="evidence" value="ECO:0007669"/>
    <property type="project" value="UniProtKB-UniRule"/>
</dbReference>
<dbReference type="GO" id="GO:0005525">
    <property type="term" value="F:GTP binding"/>
    <property type="evidence" value="ECO:0007669"/>
    <property type="project" value="UniProtKB-UniRule"/>
</dbReference>
<dbReference type="Gene3D" id="3.40.50.300">
    <property type="entry name" value="P-loop containing nucleotide triphosphate hydrolases"/>
    <property type="match status" value="1"/>
</dbReference>
<dbReference type="HAMAP" id="MF_00636">
    <property type="entry name" value="RapZ_like"/>
    <property type="match status" value="1"/>
</dbReference>
<dbReference type="InterPro" id="IPR027417">
    <property type="entry name" value="P-loop_NTPase"/>
</dbReference>
<dbReference type="InterPro" id="IPR005337">
    <property type="entry name" value="RapZ-like"/>
</dbReference>
<dbReference type="InterPro" id="IPR053930">
    <property type="entry name" value="RapZ-like_N"/>
</dbReference>
<dbReference type="InterPro" id="IPR053931">
    <property type="entry name" value="RapZ_C"/>
</dbReference>
<dbReference type="NCBIfam" id="NF003828">
    <property type="entry name" value="PRK05416.1"/>
    <property type="match status" value="1"/>
</dbReference>
<dbReference type="PANTHER" id="PTHR30448">
    <property type="entry name" value="RNASE ADAPTER PROTEIN RAPZ"/>
    <property type="match status" value="1"/>
</dbReference>
<dbReference type="PANTHER" id="PTHR30448:SF0">
    <property type="entry name" value="RNASE ADAPTER PROTEIN RAPZ"/>
    <property type="match status" value="1"/>
</dbReference>
<dbReference type="Pfam" id="PF22740">
    <property type="entry name" value="PapZ_C"/>
    <property type="match status" value="1"/>
</dbReference>
<dbReference type="Pfam" id="PF03668">
    <property type="entry name" value="RapZ-like_N"/>
    <property type="match status" value="1"/>
</dbReference>
<dbReference type="PIRSF" id="PIRSF005052">
    <property type="entry name" value="P-loopkin"/>
    <property type="match status" value="1"/>
</dbReference>
<dbReference type="SUPFAM" id="SSF52540">
    <property type="entry name" value="P-loop containing nucleoside triphosphate hydrolases"/>
    <property type="match status" value="1"/>
</dbReference>
<name>Y186_SYMTH</name>
<keyword id="KW-0067">ATP-binding</keyword>
<keyword id="KW-0342">GTP-binding</keyword>
<keyword id="KW-0547">Nucleotide-binding</keyword>
<keyword id="KW-1185">Reference proteome</keyword>
<gene>
    <name type="ordered locus">STH186</name>
</gene>
<evidence type="ECO:0000255" key="1">
    <source>
        <dbReference type="HAMAP-Rule" id="MF_00636"/>
    </source>
</evidence>
<proteinExistence type="inferred from homology"/>
<organism>
    <name type="scientific">Symbiobacterium thermophilum (strain DSM 24528 / JCM 14929 / IAM 14863 / T)</name>
    <dbReference type="NCBI Taxonomy" id="292459"/>
    <lineage>
        <taxon>Bacteria</taxon>
        <taxon>Bacillati</taxon>
        <taxon>Bacillota</taxon>
        <taxon>Clostridia</taxon>
        <taxon>Eubacteriales</taxon>
        <taxon>Symbiobacteriaceae</taxon>
        <taxon>Symbiobacterium</taxon>
    </lineage>
</organism>
<comment type="function">
    <text evidence="1">Displays ATPase and GTPase activities.</text>
</comment>
<comment type="similarity">
    <text evidence="1">Belongs to the RapZ-like family.</text>
</comment>
<sequence length="302" mass="34302">MMDVDRSIRLVIVTGMSGAGKTQALKYLEDLGFFCVDNLPPSLMPKLAELFGQTEGKVSRLALGIDIRGGRFFHEILGALRQIAEIGVAYQILFMDASDEVLVRRYKETRRRHPLAAQGRVLDGIQRERRLLQELRGLATFIIDTTHMTPADLRKELNRRFGQDRESPHFHVNVVSFGFKHGAVLDADLVFDVRFLPNPHYVPDLQPLTGEDPAVVEYVMKWNVTQQFYRRLTGLIGFLLPHYVAEGKSLLTIAIGCTGGKHRSVCLANRLAHWIRERGYSVSVEHRDMPRPADRSDEEEQP</sequence>